<accession>O22456</accession>
<accession>Q8GWQ4</accession>
<accession>Q8L9R5</accession>
<proteinExistence type="evidence at protein level"/>
<dbReference type="EMBL" id="AF015552">
    <property type="protein sequence ID" value="AAB67832.1"/>
    <property type="molecule type" value="mRNA"/>
</dbReference>
<dbReference type="EMBL" id="AC002396">
    <property type="protein sequence ID" value="AAC00586.1"/>
    <property type="molecule type" value="Genomic_DNA"/>
</dbReference>
<dbReference type="EMBL" id="CP002684">
    <property type="protein sequence ID" value="AEE30502.1"/>
    <property type="molecule type" value="Genomic_DNA"/>
</dbReference>
<dbReference type="EMBL" id="CP002684">
    <property type="protein sequence ID" value="AEE30503.1"/>
    <property type="molecule type" value="Genomic_DNA"/>
</dbReference>
<dbReference type="EMBL" id="AY088272">
    <property type="protein sequence ID" value="AAM65812.1"/>
    <property type="molecule type" value="mRNA"/>
</dbReference>
<dbReference type="EMBL" id="AK118696">
    <property type="protein sequence ID" value="BAC43290.1"/>
    <property type="status" value="ALT_INIT"/>
    <property type="molecule type" value="mRNA"/>
</dbReference>
<dbReference type="PIR" id="T00656">
    <property type="entry name" value="T00656"/>
</dbReference>
<dbReference type="RefSeq" id="NP_564214.2">
    <molecule id="O22456-1"/>
    <property type="nucleotide sequence ID" value="NM_102272.4"/>
</dbReference>
<dbReference type="RefSeq" id="NP_850953.1">
    <molecule id="O22456-2"/>
    <property type="nucleotide sequence ID" value="NM_180622.3"/>
</dbReference>
<dbReference type="PDB" id="4OX0">
    <property type="method" value="X-ray"/>
    <property type="resolution" value="2.49 A"/>
    <property type="chains" value="A/B/C/D=75-178"/>
</dbReference>
<dbReference type="PDB" id="7NB0">
    <property type="method" value="X-ray"/>
    <property type="resolution" value="2.10 A"/>
    <property type="chains" value="A/B/C/D=18-74"/>
</dbReference>
<dbReference type="PDB" id="8CRA">
    <property type="method" value="X-ray"/>
    <property type="resolution" value="2.40 A"/>
    <property type="chains" value="E/F/G/H=80-177"/>
</dbReference>
<dbReference type="PDBsum" id="4OX0"/>
<dbReference type="PDBsum" id="7NB0"/>
<dbReference type="PDBsum" id="8CRA"/>
<dbReference type="SMR" id="O22456"/>
<dbReference type="BioGRID" id="24278">
    <property type="interactions" value="25"/>
</dbReference>
<dbReference type="DIP" id="DIP-33800N"/>
<dbReference type="FunCoup" id="O22456">
    <property type="interactions" value="40"/>
</dbReference>
<dbReference type="IntAct" id="O22456">
    <property type="interactions" value="25"/>
</dbReference>
<dbReference type="STRING" id="3702.O22456"/>
<dbReference type="PaxDb" id="3702-AT1G24260.2"/>
<dbReference type="ProteomicsDB" id="234508">
    <molecule id="O22456-1"/>
</dbReference>
<dbReference type="EnsemblPlants" id="AT1G24260.1">
    <molecule id="O22456-2"/>
    <property type="protein sequence ID" value="AT1G24260.1"/>
    <property type="gene ID" value="AT1G24260"/>
</dbReference>
<dbReference type="EnsemblPlants" id="AT1G24260.2">
    <molecule id="O22456-1"/>
    <property type="protein sequence ID" value="AT1G24260.2"/>
    <property type="gene ID" value="AT1G24260"/>
</dbReference>
<dbReference type="GeneID" id="839040"/>
<dbReference type="Gramene" id="AT1G24260.1">
    <molecule id="O22456-2"/>
    <property type="protein sequence ID" value="AT1G24260.1"/>
    <property type="gene ID" value="AT1G24260"/>
</dbReference>
<dbReference type="Gramene" id="AT1G24260.2">
    <molecule id="O22456-1"/>
    <property type="protein sequence ID" value="AT1G24260.2"/>
    <property type="gene ID" value="AT1G24260"/>
</dbReference>
<dbReference type="KEGG" id="ath:AT1G24260"/>
<dbReference type="Araport" id="AT1G24260"/>
<dbReference type="TAIR" id="AT1G24260">
    <property type="gene designation" value="SEP3"/>
</dbReference>
<dbReference type="eggNOG" id="KOG0014">
    <property type="taxonomic scope" value="Eukaryota"/>
</dbReference>
<dbReference type="InParanoid" id="O22456"/>
<dbReference type="OMA" id="GYQINSM"/>
<dbReference type="OrthoDB" id="1898716at2759"/>
<dbReference type="PhylomeDB" id="O22456"/>
<dbReference type="EvolutionaryTrace" id="O22456"/>
<dbReference type="PRO" id="PR:O22456"/>
<dbReference type="Proteomes" id="UP000006548">
    <property type="component" value="Chromosome 1"/>
</dbReference>
<dbReference type="ExpressionAtlas" id="O22456">
    <property type="expression patterns" value="baseline and differential"/>
</dbReference>
<dbReference type="GO" id="GO:0005634">
    <property type="term" value="C:nucleus"/>
    <property type="evidence" value="ECO:0000314"/>
    <property type="project" value="TAIR"/>
</dbReference>
<dbReference type="GO" id="GO:0003677">
    <property type="term" value="F:DNA binding"/>
    <property type="evidence" value="ECO:0000314"/>
    <property type="project" value="TAIR"/>
</dbReference>
<dbReference type="GO" id="GO:0003700">
    <property type="term" value="F:DNA-binding transcription factor activity"/>
    <property type="evidence" value="ECO:0000250"/>
    <property type="project" value="TAIR"/>
</dbReference>
<dbReference type="GO" id="GO:0046983">
    <property type="term" value="F:protein dimerization activity"/>
    <property type="evidence" value="ECO:0007669"/>
    <property type="project" value="InterPro"/>
</dbReference>
<dbReference type="GO" id="GO:0000977">
    <property type="term" value="F:RNA polymerase II transcription regulatory region sequence-specific DNA binding"/>
    <property type="evidence" value="ECO:0007669"/>
    <property type="project" value="InterPro"/>
</dbReference>
<dbReference type="GO" id="GO:0001708">
    <property type="term" value="P:cell fate specification"/>
    <property type="evidence" value="ECO:0000315"/>
    <property type="project" value="TAIR"/>
</dbReference>
<dbReference type="GO" id="GO:0009908">
    <property type="term" value="P:flower development"/>
    <property type="evidence" value="ECO:0000304"/>
    <property type="project" value="TAIR"/>
</dbReference>
<dbReference type="GO" id="GO:0080001">
    <property type="term" value="P:mucilage extrusion from seed coat"/>
    <property type="evidence" value="ECO:0000315"/>
    <property type="project" value="TAIR"/>
</dbReference>
<dbReference type="GO" id="GO:0048481">
    <property type="term" value="P:plant ovule development"/>
    <property type="evidence" value="ECO:0000315"/>
    <property type="project" value="TAIR"/>
</dbReference>
<dbReference type="GO" id="GO:0045944">
    <property type="term" value="P:positive regulation of transcription by RNA polymerase II"/>
    <property type="evidence" value="ECO:0007669"/>
    <property type="project" value="InterPro"/>
</dbReference>
<dbReference type="GO" id="GO:0010214">
    <property type="term" value="P:seed coat development"/>
    <property type="evidence" value="ECO:0000315"/>
    <property type="project" value="TAIR"/>
</dbReference>
<dbReference type="GO" id="GO:0010093">
    <property type="term" value="P:specification of floral organ identity"/>
    <property type="evidence" value="ECO:0000315"/>
    <property type="project" value="TAIR"/>
</dbReference>
<dbReference type="GO" id="GO:0048833">
    <property type="term" value="P:specification of floral organ number"/>
    <property type="evidence" value="ECO:0000315"/>
    <property type="project" value="TAIR"/>
</dbReference>
<dbReference type="CDD" id="cd00265">
    <property type="entry name" value="MADS_MEF2_like"/>
    <property type="match status" value="1"/>
</dbReference>
<dbReference type="FunFam" id="3.40.1810.10:FF:000011">
    <property type="entry name" value="MADS-box transcription factor 7"/>
    <property type="match status" value="1"/>
</dbReference>
<dbReference type="Gene3D" id="3.40.1810.10">
    <property type="entry name" value="Transcription factor, MADS-box"/>
    <property type="match status" value="1"/>
</dbReference>
<dbReference type="InterPro" id="IPR050142">
    <property type="entry name" value="MADS-box/MEF2_TF"/>
</dbReference>
<dbReference type="InterPro" id="IPR033896">
    <property type="entry name" value="MEF2-like_N"/>
</dbReference>
<dbReference type="InterPro" id="IPR002487">
    <property type="entry name" value="TF_Kbox"/>
</dbReference>
<dbReference type="InterPro" id="IPR002100">
    <property type="entry name" value="TF_MADSbox"/>
</dbReference>
<dbReference type="InterPro" id="IPR036879">
    <property type="entry name" value="TF_MADSbox_sf"/>
</dbReference>
<dbReference type="PANTHER" id="PTHR48019">
    <property type="entry name" value="SERUM RESPONSE FACTOR HOMOLOG"/>
    <property type="match status" value="1"/>
</dbReference>
<dbReference type="Pfam" id="PF01486">
    <property type="entry name" value="K-box"/>
    <property type="match status" value="1"/>
</dbReference>
<dbReference type="Pfam" id="PF00319">
    <property type="entry name" value="SRF-TF"/>
    <property type="match status" value="1"/>
</dbReference>
<dbReference type="PRINTS" id="PR00404">
    <property type="entry name" value="MADSDOMAIN"/>
</dbReference>
<dbReference type="SMART" id="SM00432">
    <property type="entry name" value="MADS"/>
    <property type="match status" value="1"/>
</dbReference>
<dbReference type="SUPFAM" id="SSF55455">
    <property type="entry name" value="SRF-like"/>
    <property type="match status" value="1"/>
</dbReference>
<dbReference type="PROSITE" id="PS51297">
    <property type="entry name" value="K_BOX"/>
    <property type="match status" value="1"/>
</dbReference>
<dbReference type="PROSITE" id="PS00350">
    <property type="entry name" value="MADS_BOX_1"/>
    <property type="match status" value="1"/>
</dbReference>
<dbReference type="PROSITE" id="PS50066">
    <property type="entry name" value="MADS_BOX_2"/>
    <property type="match status" value="1"/>
</dbReference>
<name>SEP3_ARATH</name>
<organism>
    <name type="scientific">Arabidopsis thaliana</name>
    <name type="common">Mouse-ear cress</name>
    <dbReference type="NCBI Taxonomy" id="3702"/>
    <lineage>
        <taxon>Eukaryota</taxon>
        <taxon>Viridiplantae</taxon>
        <taxon>Streptophyta</taxon>
        <taxon>Embryophyta</taxon>
        <taxon>Tracheophyta</taxon>
        <taxon>Spermatophyta</taxon>
        <taxon>Magnoliopsida</taxon>
        <taxon>eudicotyledons</taxon>
        <taxon>Gunneridae</taxon>
        <taxon>Pentapetalae</taxon>
        <taxon>rosids</taxon>
        <taxon>malvids</taxon>
        <taxon>Brassicales</taxon>
        <taxon>Brassicaceae</taxon>
        <taxon>Camelineae</taxon>
        <taxon>Arabidopsis</taxon>
    </lineage>
</organism>
<sequence>MGRGRVELKRIENKINRQVTFAKRRNGLLKKAYELSVLCDAEVALIIFSNRGKLYEFCSSSSMLRTLERYQKCNYGAPEPNVPSREALAVELSSQQEYLKLKERYDALQRTQRNLLGEDLGPLSTKELESLERQLDSSLKQIRALRTQFMLDQLNDLQSKERMLTETNKTLRLRLADGYQMPLQLNPNQEEVDHYGRHHHQQQQHSQAFFQPLECEPILQIGYQGQQDGMGAGPSVNNYMLGWLPYDTNSI</sequence>
<gene>
    <name type="primary">SEP3</name>
    <name type="synonym">AGL9</name>
    <name type="ordered locus">At1g24260</name>
    <name type="ORF">F3I6.19</name>
</gene>
<keyword id="KW-0002">3D-structure</keyword>
<keyword id="KW-0010">Activator</keyword>
<keyword id="KW-0025">Alternative splicing</keyword>
<keyword id="KW-0175">Coiled coil</keyword>
<keyword id="KW-0217">Developmental protein</keyword>
<keyword id="KW-0221">Differentiation</keyword>
<keyword id="KW-0238">DNA-binding</keyword>
<keyword id="KW-0287">Flowering</keyword>
<keyword id="KW-0539">Nucleus</keyword>
<keyword id="KW-1185">Reference proteome</keyword>
<keyword id="KW-0804">Transcription</keyword>
<keyword id="KW-0805">Transcription regulation</keyword>
<protein>
    <recommendedName>
        <fullName>Developmental protein SEPALLATA 3</fullName>
    </recommendedName>
    <alternativeName>
        <fullName>Agamous-like MADS-box protein AGL9</fullName>
    </alternativeName>
</protein>
<comment type="function">
    <text evidence="4 5 7">Probable transcription factor active in inflorescence development and floral organogenesis. Functions with SEPALLATA1/AGL2 and SEPALLATA2/AGL4 to ensure proper development of petals, stamens and carpels and to prevent the indeterminate growth of the flower meristem. Interacts with APETALA1, AGAMOUS or APETALA3/PISTILLATA to form complexes, that could be involved in genes regulation during floral meristem development (PubMed:10821278, PubMed:11206550). Binds specifically to the CArG box DNA sequence 5'-CC (A/T)6 GG-3' (PubMed:16080001).</text>
</comment>
<comment type="subunit">
    <text evidence="6 7 8">Forms homodimers (PubMed:25228343). Heterodimer with AP1 or AG capable of binding to CArG-box sequences. Binds AP3/PI to form a ternary complex. Interacts with AGL16 (PubMed:15805477). Interacts with TT16/AGL32 (PubMed:16080001).</text>
</comment>
<comment type="interaction">
    <interactant intactId="EBI-592020">
        <id>O22456</id>
    </interactant>
    <interactant intactId="EBI-592365">
        <id>P17839</id>
        <label>AG</label>
    </interactant>
    <organismsDiffer>false</organismsDiffer>
    <experiments>5</experiments>
</comment>
<comment type="interaction">
    <interactant intactId="EBI-592020">
        <id>O22456</id>
    </interactant>
    <interactant intactId="EBI-592304">
        <id>P29381</id>
        <label>AGL1</label>
    </interactant>
    <organismsDiffer>false</organismsDiffer>
    <experiments>6</experiments>
</comment>
<comment type="interaction">
    <interactant intactId="EBI-592020">
        <id>O22456</id>
    </interactant>
    <interactant intactId="EBI-592343">
        <id>Q38836</id>
        <label>AGL11</label>
    </interactant>
    <organismsDiffer>false</organismsDiffer>
    <experiments>4</experiments>
</comment>
<comment type="interaction">
    <interactant intactId="EBI-592020">
        <id>O22456</id>
    </interactant>
    <interactant intactId="EBI-621949">
        <id>P29385</id>
        <label>AGL5</label>
    </interactant>
    <organismsDiffer>false</organismsDiffer>
    <experiments>3</experiments>
</comment>
<comment type="interaction">
    <interactant intactId="EBI-592020">
        <id>O22456</id>
    </interactant>
    <interactant intactId="EBI-621912">
        <id>Q38876</id>
        <label>AGL8</label>
    </interactant>
    <organismsDiffer>false</organismsDiffer>
    <experiments>3</experiments>
</comment>
<comment type="interaction">
    <interactant intactId="EBI-592020">
        <id>O22456</id>
    </interactant>
    <interactant intactId="EBI-592003">
        <id>P35631</id>
        <label>AP1</label>
    </interactant>
    <organismsDiffer>false</organismsDiffer>
    <experiments>4</experiments>
</comment>
<comment type="interaction">
    <interactant intactId="EBI-592020">
        <id>O22456</id>
    </interactant>
    <interactant intactId="EBI-2025535">
        <id>Q6EVK6</id>
        <label>BRM</label>
    </interactant>
    <organismsDiffer>false</organismsDiffer>
    <experiments>2</experiments>
</comment>
<comment type="interaction">
    <interactant intactId="EBI-592020">
        <id>O22456</id>
    </interactant>
    <interactant intactId="EBI-1395334">
        <id>P48007</id>
        <label>PI</label>
    </interactant>
    <organismsDiffer>false</organismsDiffer>
    <experiments>3</experiments>
</comment>
<comment type="interaction">
    <interactant intactId="EBI-592020">
        <id>O22456</id>
    </interactant>
    <interactant intactId="EBI-1771131">
        <id>Q8W234</id>
        <label>SEU</label>
    </interactant>
    <organismsDiffer>false</organismsDiffer>
    <experiments>2</experiments>
</comment>
<comment type="interaction">
    <interactant intactId="EBI-592020">
        <id>O22456</id>
    </interactant>
    <interactant intactId="EBI-592328">
        <id>Q5XXE7</id>
        <label>SHP2</label>
    </interactant>
    <organismsDiffer>false</organismsDiffer>
    <experiments>3</experiments>
</comment>
<comment type="interaction">
    <interactant intactId="EBI-592020">
        <id>O22456</id>
    </interactant>
    <interactant intactId="EBI-15967899">
        <id>F4IHS2</id>
        <label>SYD</label>
    </interactant>
    <organismsDiffer>false</organismsDiffer>
    <experiments>2</experiments>
</comment>
<comment type="interaction">
    <interactant intactId="EBI-592020">
        <id>O22456</id>
    </interactant>
    <interactant intactId="EBI-621993">
        <id>Q8RYD9</id>
        <label>TT16</label>
    </interactant>
    <organismsDiffer>false</organismsDiffer>
    <experiments>7</experiments>
</comment>
<comment type="interaction">
    <interactant intactId="EBI-592020">
        <id>O22456</id>
    </interactant>
    <interactant intactId="EBI-16100490">
        <id>Q2NJQ2</id>
        <label>AYWB_224</label>
    </interactant>
    <organismsDiffer>true</organismsDiffer>
    <experiments>5</experiments>
</comment>
<comment type="subcellular location">
    <subcellularLocation>
        <location evidence="2">Nucleus</location>
    </subcellularLocation>
</comment>
<comment type="alternative products">
    <event type="alternative splicing"/>
    <isoform>
        <id>O22456-1</id>
        <name>1</name>
        <sequence type="displayed"/>
    </isoform>
    <isoform>
        <id>O22456-2</id>
        <name>2</name>
        <sequence type="described" ref="VSP_008893"/>
    </isoform>
</comment>
<comment type="developmental stage">
    <text>Expressed early during flower development within petals, stamens, and carpels.</text>
</comment>
<comment type="disruption phenotype">
    <text evidence="4">Triple mutations in the SEP1, SEP2 and SEP3 genes result in the replacement of the stamens and petals by sepals and of the carpels by a new mutant flower with sepaloid organs.</text>
</comment>
<comment type="miscellaneous">
    <molecule>Isoform 2</molecule>
    <text evidence="10">May be due to a competing acceptor splice site.</text>
</comment>
<comment type="sequence caution" evidence="10">
    <conflict type="erroneous initiation">
        <sequence resource="EMBL-CDS" id="BAC43290"/>
    </conflict>
    <text>Truncated N-terminus.</text>
</comment>
<feature type="chain" id="PRO_0000199485" description="Developmental protein SEPALLATA 3">
    <location>
        <begin position="1"/>
        <end position="251"/>
    </location>
</feature>
<feature type="domain" description="MADS-box" evidence="2">
    <location>
        <begin position="3"/>
        <end position="57"/>
    </location>
</feature>
<feature type="domain" description="K-box" evidence="3">
    <location>
        <begin position="91"/>
        <end position="181"/>
    </location>
</feature>
<feature type="coiled-coil region" evidence="1">
    <location>
        <begin position="94"/>
        <end position="177"/>
    </location>
</feature>
<feature type="splice variant" id="VSP_008893" description="In isoform 2." evidence="9">
    <location>
        <position position="90"/>
    </location>
</feature>
<feature type="helix" evidence="11">
    <location>
        <begin position="21"/>
        <end position="39"/>
    </location>
</feature>
<feature type="strand" evidence="11">
    <location>
        <begin position="42"/>
        <end position="48"/>
    </location>
</feature>
<feature type="strand" evidence="11">
    <location>
        <begin position="54"/>
        <end position="61"/>
    </location>
</feature>
<feature type="helix" evidence="11">
    <location>
        <begin position="63"/>
        <end position="73"/>
    </location>
</feature>
<feature type="helix" evidence="12">
    <location>
        <begin position="85"/>
        <end position="115"/>
    </location>
</feature>
<feature type="helix" evidence="12">
    <location>
        <begin position="125"/>
        <end position="174"/>
    </location>
</feature>
<evidence type="ECO:0000255" key="1"/>
<evidence type="ECO:0000255" key="2">
    <source>
        <dbReference type="PROSITE-ProRule" id="PRU00251"/>
    </source>
</evidence>
<evidence type="ECO:0000255" key="3">
    <source>
        <dbReference type="PROSITE-ProRule" id="PRU00629"/>
    </source>
</evidence>
<evidence type="ECO:0000269" key="4">
    <source>
    </source>
</evidence>
<evidence type="ECO:0000269" key="5">
    <source>
    </source>
</evidence>
<evidence type="ECO:0000269" key="6">
    <source>
    </source>
</evidence>
<evidence type="ECO:0000269" key="7">
    <source>
    </source>
</evidence>
<evidence type="ECO:0000269" key="8">
    <source>
    </source>
</evidence>
<evidence type="ECO:0000303" key="9">
    <source ref="4"/>
</evidence>
<evidence type="ECO:0000305" key="10"/>
<evidence type="ECO:0007829" key="11">
    <source>
        <dbReference type="PDB" id="7NB0"/>
    </source>
</evidence>
<evidence type="ECO:0007829" key="12">
    <source>
        <dbReference type="PDB" id="8CRA"/>
    </source>
</evidence>
<reference key="1">
    <citation type="journal article" date="1998" name="Sex. Plant Reprod.">
        <title>The Arabidopsis AGL9 MADS box gene is expressed in young flower primordia.</title>
        <authorList>
            <person name="Mandel M.A."/>
            <person name="Yanofsky M.F."/>
        </authorList>
        <dbReference type="AGRICOLA" id="IND21642003"/>
    </citation>
    <scope>NUCLEOTIDE SEQUENCE [MRNA] (ISOFORM 1)</scope>
    <source>
        <strain>cv. Landsberg erecta</strain>
    </source>
</reference>
<reference key="2">
    <citation type="journal article" date="2000" name="Nature">
        <title>Sequence and analysis of chromosome 1 of the plant Arabidopsis thaliana.</title>
        <authorList>
            <person name="Theologis A."/>
            <person name="Ecker J.R."/>
            <person name="Palm C.J."/>
            <person name="Federspiel N.A."/>
            <person name="Kaul S."/>
            <person name="White O."/>
            <person name="Alonso J."/>
            <person name="Altafi H."/>
            <person name="Araujo R."/>
            <person name="Bowman C.L."/>
            <person name="Brooks S.Y."/>
            <person name="Buehler E."/>
            <person name="Chan A."/>
            <person name="Chao Q."/>
            <person name="Chen H."/>
            <person name="Cheuk R.F."/>
            <person name="Chin C.W."/>
            <person name="Chung M.K."/>
            <person name="Conn L."/>
            <person name="Conway A.B."/>
            <person name="Conway A.R."/>
            <person name="Creasy T.H."/>
            <person name="Dewar K."/>
            <person name="Dunn P."/>
            <person name="Etgu P."/>
            <person name="Feldblyum T.V."/>
            <person name="Feng J.-D."/>
            <person name="Fong B."/>
            <person name="Fujii C.Y."/>
            <person name="Gill J.E."/>
            <person name="Goldsmith A.D."/>
            <person name="Haas B."/>
            <person name="Hansen N.F."/>
            <person name="Hughes B."/>
            <person name="Huizar L."/>
            <person name="Hunter J.L."/>
            <person name="Jenkins J."/>
            <person name="Johnson-Hopson C."/>
            <person name="Khan S."/>
            <person name="Khaykin E."/>
            <person name="Kim C.J."/>
            <person name="Koo H.L."/>
            <person name="Kremenetskaia I."/>
            <person name="Kurtz D.B."/>
            <person name="Kwan A."/>
            <person name="Lam B."/>
            <person name="Langin-Hooper S."/>
            <person name="Lee A."/>
            <person name="Lee J.M."/>
            <person name="Lenz C.A."/>
            <person name="Li J.H."/>
            <person name="Li Y.-P."/>
            <person name="Lin X."/>
            <person name="Liu S.X."/>
            <person name="Liu Z.A."/>
            <person name="Luros J.S."/>
            <person name="Maiti R."/>
            <person name="Marziali A."/>
            <person name="Militscher J."/>
            <person name="Miranda M."/>
            <person name="Nguyen M."/>
            <person name="Nierman W.C."/>
            <person name="Osborne B.I."/>
            <person name="Pai G."/>
            <person name="Peterson J."/>
            <person name="Pham P.K."/>
            <person name="Rizzo M."/>
            <person name="Rooney T."/>
            <person name="Rowley D."/>
            <person name="Sakano H."/>
            <person name="Salzberg S.L."/>
            <person name="Schwartz J.R."/>
            <person name="Shinn P."/>
            <person name="Southwick A.M."/>
            <person name="Sun H."/>
            <person name="Tallon L.J."/>
            <person name="Tambunga G."/>
            <person name="Toriumi M.J."/>
            <person name="Town C.D."/>
            <person name="Utterback T."/>
            <person name="Van Aken S."/>
            <person name="Vaysberg M."/>
            <person name="Vysotskaia V.S."/>
            <person name="Walker M."/>
            <person name="Wu D."/>
            <person name="Yu G."/>
            <person name="Fraser C.M."/>
            <person name="Venter J.C."/>
            <person name="Davis R.W."/>
        </authorList>
    </citation>
    <scope>NUCLEOTIDE SEQUENCE [LARGE SCALE GENOMIC DNA]</scope>
    <source>
        <strain>cv. Columbia</strain>
    </source>
</reference>
<reference key="3">
    <citation type="journal article" date="2017" name="Plant J.">
        <title>Araport11: a complete reannotation of the Arabidopsis thaliana reference genome.</title>
        <authorList>
            <person name="Cheng C.Y."/>
            <person name="Krishnakumar V."/>
            <person name="Chan A.P."/>
            <person name="Thibaud-Nissen F."/>
            <person name="Schobel S."/>
            <person name="Town C.D."/>
        </authorList>
    </citation>
    <scope>GENOME REANNOTATION</scope>
    <source>
        <strain>cv. Columbia</strain>
    </source>
</reference>
<reference key="4">
    <citation type="submission" date="2002-03" db="EMBL/GenBank/DDBJ databases">
        <title>Full-length cDNA from Arabidopsis thaliana.</title>
        <authorList>
            <person name="Brover V.V."/>
            <person name="Troukhan M.E."/>
            <person name="Alexandrov N.A."/>
            <person name="Lu Y.-P."/>
            <person name="Flavell R.B."/>
            <person name="Feldmann K.A."/>
        </authorList>
    </citation>
    <scope>NUCLEOTIDE SEQUENCE [LARGE SCALE MRNA] (ISOFORM 2)</scope>
</reference>
<reference key="5">
    <citation type="journal article" date="2002" name="Science">
        <title>Functional annotation of a full-length Arabidopsis cDNA collection.</title>
        <authorList>
            <person name="Seki M."/>
            <person name="Narusaka M."/>
            <person name="Kamiya A."/>
            <person name="Ishida J."/>
            <person name="Satou M."/>
            <person name="Sakurai T."/>
            <person name="Nakajima M."/>
            <person name="Enju A."/>
            <person name="Akiyama K."/>
            <person name="Oono Y."/>
            <person name="Muramatsu M."/>
            <person name="Hayashizaki Y."/>
            <person name="Kawai J."/>
            <person name="Carninci P."/>
            <person name="Itoh M."/>
            <person name="Ishii Y."/>
            <person name="Arakawa T."/>
            <person name="Shibata K."/>
            <person name="Shinagawa A."/>
            <person name="Shinozaki K."/>
        </authorList>
    </citation>
    <scope>NUCLEOTIDE SEQUENCE [LARGE SCALE MRNA] OF 114-251</scope>
    <source>
        <strain>cv. Columbia</strain>
    </source>
</reference>
<reference key="6">
    <citation type="journal article" date="1997" name="Plant J.">
        <title>Specific interactions between the K domains of AG and AGLs, members of the MADS domain family of DNA binding proteins.</title>
        <authorList>
            <person name="Fan H.-Y."/>
            <person name="Hu Y."/>
            <person name="Tudor M."/>
            <person name="Ma H."/>
        </authorList>
    </citation>
    <scope>CHARACTERIZATION</scope>
</reference>
<reference key="7">
    <citation type="journal article" date="2000" name="Nature">
        <title>B and C floral organ identity functions require SEPALLATA MADS-box genes.</title>
        <authorList>
            <person name="Pelaz S."/>
            <person name="Ditta G.S."/>
            <person name="Baumann E."/>
            <person name="Wisman E."/>
            <person name="Yanofsky M.F."/>
        </authorList>
    </citation>
    <scope>CHARACTERIZATION</scope>
    <scope>DISRUPTION PHENOTYPE</scope>
</reference>
<reference key="8">
    <citation type="journal article" date="2001" name="Nature">
        <title>Complexes of MADS-box proteins are sufficient to convert leaves into floral organs.</title>
        <authorList>
            <person name="Honma T."/>
            <person name="Goto K."/>
        </authorList>
    </citation>
    <scope>CHARACTERIZATION</scope>
</reference>
<reference key="9">
    <citation type="journal article" date="2005" name="Mol. Genet. Genomics">
        <title>Mutant analysis, protein-protein interactions and subcellular localization of the Arabidopsis B sister (ABS) protein.</title>
        <authorList>
            <person name="Kaufmann K."/>
            <person name="Anfang N."/>
            <person name="Saedler H."/>
            <person name="Theissen G."/>
        </authorList>
    </citation>
    <scope>FUNCTION</scope>
    <scope>INTERACTION WITH TT16/AGL32</scope>
</reference>
<reference key="10">
    <citation type="journal article" date="2005" name="Plant Cell">
        <title>Comprehensive interaction map of the Arabidopsis MADS Box transcription factors.</title>
        <authorList>
            <person name="de Folter S."/>
            <person name="Immink R.G.H."/>
            <person name="Kieffer M."/>
            <person name="Parenicova L."/>
            <person name="Henz S.R."/>
            <person name="Weigel D."/>
            <person name="Busscher M."/>
            <person name="Kooiker M."/>
            <person name="Colombo L."/>
            <person name="Kater M.M."/>
            <person name="Davies B."/>
            <person name="Angenent G.C."/>
        </authorList>
    </citation>
    <scope>INTERACTION WITH AGL16</scope>
</reference>
<reference key="11">
    <citation type="journal article" date="2014" name="Plant Cell">
        <title>Structural basis for the oligomerization of the MADS domain transcription factor SEPALLATA3 in Arabidopsis.</title>
        <authorList>
            <person name="Puranik S."/>
            <person name="Acajjaoui S."/>
            <person name="Conn S."/>
            <person name="Costa L."/>
            <person name="Conn V."/>
            <person name="Vial A."/>
            <person name="Marcellin R."/>
            <person name="Melzer R."/>
            <person name="Brown E."/>
            <person name="Hart D."/>
            <person name="Theissen G."/>
            <person name="Silva C.S."/>
            <person name="Parcy F."/>
            <person name="Dumas R."/>
            <person name="Nanao M."/>
            <person name="Zubieta C."/>
        </authorList>
    </citation>
    <scope>X-RAY CRYSTALLOGRAPHY (2.49 ANGSTROMS) OF 75-178</scope>
    <scope>HOMODIMERIZATION</scope>
</reference>